<comment type="function">
    <text evidence="1">Acts as a chaperone.</text>
</comment>
<comment type="induction">
    <text evidence="1">By stress conditions e.g. heat shock.</text>
</comment>
<comment type="similarity">
    <text evidence="1">Belongs to the heat shock protein 70 family.</text>
</comment>
<proteinExistence type="inferred from homology"/>
<feature type="chain" id="PRO_0000226016" description="Chaperone protein DnaK">
    <location>
        <begin position="1"/>
        <end position="607"/>
    </location>
</feature>
<feature type="region of interest" description="Disordered" evidence="2">
    <location>
        <begin position="579"/>
        <end position="607"/>
    </location>
</feature>
<feature type="compositionally biased region" description="Low complexity" evidence="2">
    <location>
        <begin position="579"/>
        <end position="591"/>
    </location>
</feature>
<feature type="compositionally biased region" description="Acidic residues" evidence="2">
    <location>
        <begin position="595"/>
        <end position="607"/>
    </location>
</feature>
<feature type="modified residue" description="Phosphothreonine; by autocatalysis" evidence="1">
    <location>
        <position position="173"/>
    </location>
</feature>
<accession>Q5M6D1</accession>
<organism>
    <name type="scientific">Streptococcus thermophilus (strain ATCC BAA-250 / LMG 18311)</name>
    <dbReference type="NCBI Taxonomy" id="264199"/>
    <lineage>
        <taxon>Bacteria</taxon>
        <taxon>Bacillati</taxon>
        <taxon>Bacillota</taxon>
        <taxon>Bacilli</taxon>
        <taxon>Lactobacillales</taxon>
        <taxon>Streptococcaceae</taxon>
        <taxon>Streptococcus</taxon>
    </lineage>
</organism>
<evidence type="ECO:0000255" key="1">
    <source>
        <dbReference type="HAMAP-Rule" id="MF_00332"/>
    </source>
</evidence>
<evidence type="ECO:0000256" key="2">
    <source>
        <dbReference type="SAM" id="MobiDB-lite"/>
    </source>
</evidence>
<gene>
    <name evidence="1" type="primary">dnaK</name>
    <name type="ordered locus">stu0120</name>
</gene>
<reference key="1">
    <citation type="journal article" date="2004" name="Nat. Biotechnol.">
        <title>Complete sequence and comparative genome analysis of the dairy bacterium Streptococcus thermophilus.</title>
        <authorList>
            <person name="Bolotin A."/>
            <person name="Quinquis B."/>
            <person name="Renault P."/>
            <person name="Sorokin A."/>
            <person name="Ehrlich S.D."/>
            <person name="Kulakauskas S."/>
            <person name="Lapidus A."/>
            <person name="Goltsman E."/>
            <person name="Mazur M."/>
            <person name="Pusch G.D."/>
            <person name="Fonstein M."/>
            <person name="Overbeek R."/>
            <person name="Kyprides N."/>
            <person name="Purnelle B."/>
            <person name="Prozzi D."/>
            <person name="Ngui K."/>
            <person name="Masuy D."/>
            <person name="Hancy F."/>
            <person name="Burteau S."/>
            <person name="Boutry M."/>
            <person name="Delcour J."/>
            <person name="Goffeau A."/>
            <person name="Hols P."/>
        </authorList>
    </citation>
    <scope>NUCLEOTIDE SEQUENCE [LARGE SCALE GENOMIC DNA]</scope>
    <source>
        <strain>ATCC BAA-250 / LMG 18311</strain>
    </source>
</reference>
<sequence length="607" mass="64778">MSKIIGIDLGTTNSAVAVLEGTEPKIIANPEGNRTTPSVVSFKNGEIIVGDAAKRQAVTNPDTVISIKSKMGTSEKVSANGKEYTPQEISALILQYLKGYAEEYLGEKVTKAVITVPAYFNDAQRQATKDAGKIAGLEVERIVNEPTAAALAYGLDKTDKEEKILVFDLGGGTFDVSILELGDGVFDVLATAGDNKLGGDDFDQKIIDYMVEEFKKENGIDLSTDKMALQRLKDAAEKAKKDLSGVTSTQISLPFITAGEAGPLHLEMTLTRAKFDDLTRDLVERTKTPVRQALSDAGLSLSDIDEVILVGGSTRIPAVVEAVKAETGKEPNKSVNPDEVVAMGAAIQGGVISGDVKDVVLLDVTPLSLGIETMGGVFTKLIERNTTIPTSKSQVFSTAADNQPAVDIHVLQGERPMAADNKTLGRFQLTDIPAAPRGVPQIEVTFDIDKNGIVSVKAKDLGTQKEQTIVIQSNSGLTDEEIERMMKDAEANAEADAKRKAEVELRNEVDQAIFATEKTIKETEGKGFDTERDAAQSALDELKKAQESGNLDDMKAKLEALNEKAQALAVKLYEQAAAAQQAQAGAEGAQATDNSGDDVVDGEFTEK</sequence>
<keyword id="KW-0067">ATP-binding</keyword>
<keyword id="KW-0143">Chaperone</keyword>
<keyword id="KW-0547">Nucleotide-binding</keyword>
<keyword id="KW-0597">Phosphoprotein</keyword>
<keyword id="KW-1185">Reference proteome</keyword>
<keyword id="KW-0346">Stress response</keyword>
<dbReference type="EMBL" id="CP000023">
    <property type="protein sequence ID" value="AAV59845.1"/>
    <property type="molecule type" value="Genomic_DNA"/>
</dbReference>
<dbReference type="RefSeq" id="WP_011225330.1">
    <property type="nucleotide sequence ID" value="NC_006448.1"/>
</dbReference>
<dbReference type="SMR" id="Q5M6D1"/>
<dbReference type="STRING" id="264199.stu0120"/>
<dbReference type="KEGG" id="stl:stu0120"/>
<dbReference type="PATRIC" id="fig|264199.4.peg.122"/>
<dbReference type="eggNOG" id="COG0443">
    <property type="taxonomic scope" value="Bacteria"/>
</dbReference>
<dbReference type="HOGENOM" id="CLU_005965_2_1_9"/>
<dbReference type="Proteomes" id="UP000001170">
    <property type="component" value="Chromosome"/>
</dbReference>
<dbReference type="GO" id="GO:0005524">
    <property type="term" value="F:ATP binding"/>
    <property type="evidence" value="ECO:0007669"/>
    <property type="project" value="UniProtKB-UniRule"/>
</dbReference>
<dbReference type="GO" id="GO:0140662">
    <property type="term" value="F:ATP-dependent protein folding chaperone"/>
    <property type="evidence" value="ECO:0007669"/>
    <property type="project" value="InterPro"/>
</dbReference>
<dbReference type="GO" id="GO:0051082">
    <property type="term" value="F:unfolded protein binding"/>
    <property type="evidence" value="ECO:0007669"/>
    <property type="project" value="InterPro"/>
</dbReference>
<dbReference type="CDD" id="cd10234">
    <property type="entry name" value="ASKHA_NBD_HSP70_DnaK-like"/>
    <property type="match status" value="1"/>
</dbReference>
<dbReference type="FunFam" id="2.60.34.10:FF:000014">
    <property type="entry name" value="Chaperone protein DnaK HSP70"/>
    <property type="match status" value="1"/>
</dbReference>
<dbReference type="FunFam" id="3.30.420.40:FF:000071">
    <property type="entry name" value="Molecular chaperone DnaK"/>
    <property type="match status" value="1"/>
</dbReference>
<dbReference type="FunFam" id="3.90.640.10:FF:000003">
    <property type="entry name" value="Molecular chaperone DnaK"/>
    <property type="match status" value="1"/>
</dbReference>
<dbReference type="Gene3D" id="1.20.1270.10">
    <property type="match status" value="1"/>
</dbReference>
<dbReference type="Gene3D" id="3.30.420.40">
    <property type="match status" value="2"/>
</dbReference>
<dbReference type="Gene3D" id="3.90.640.10">
    <property type="entry name" value="Actin, Chain A, domain 4"/>
    <property type="match status" value="1"/>
</dbReference>
<dbReference type="Gene3D" id="2.60.34.10">
    <property type="entry name" value="Substrate Binding Domain Of DNAk, Chain A, domain 1"/>
    <property type="match status" value="1"/>
</dbReference>
<dbReference type="HAMAP" id="MF_00332">
    <property type="entry name" value="DnaK"/>
    <property type="match status" value="1"/>
</dbReference>
<dbReference type="InterPro" id="IPR043129">
    <property type="entry name" value="ATPase_NBD"/>
</dbReference>
<dbReference type="InterPro" id="IPR012725">
    <property type="entry name" value="Chaperone_DnaK"/>
</dbReference>
<dbReference type="InterPro" id="IPR018181">
    <property type="entry name" value="Heat_shock_70_CS"/>
</dbReference>
<dbReference type="InterPro" id="IPR029048">
    <property type="entry name" value="HSP70_C_sf"/>
</dbReference>
<dbReference type="InterPro" id="IPR029047">
    <property type="entry name" value="HSP70_peptide-bd_sf"/>
</dbReference>
<dbReference type="InterPro" id="IPR013126">
    <property type="entry name" value="Hsp_70_fam"/>
</dbReference>
<dbReference type="NCBIfam" id="NF001413">
    <property type="entry name" value="PRK00290.1"/>
    <property type="match status" value="1"/>
</dbReference>
<dbReference type="NCBIfam" id="TIGR02350">
    <property type="entry name" value="prok_dnaK"/>
    <property type="match status" value="1"/>
</dbReference>
<dbReference type="PANTHER" id="PTHR19375">
    <property type="entry name" value="HEAT SHOCK PROTEIN 70KDA"/>
    <property type="match status" value="1"/>
</dbReference>
<dbReference type="Pfam" id="PF00012">
    <property type="entry name" value="HSP70"/>
    <property type="match status" value="1"/>
</dbReference>
<dbReference type="PRINTS" id="PR00301">
    <property type="entry name" value="HEATSHOCK70"/>
</dbReference>
<dbReference type="SUPFAM" id="SSF53067">
    <property type="entry name" value="Actin-like ATPase domain"/>
    <property type="match status" value="2"/>
</dbReference>
<dbReference type="SUPFAM" id="SSF100934">
    <property type="entry name" value="Heat shock protein 70kD (HSP70), C-terminal subdomain"/>
    <property type="match status" value="1"/>
</dbReference>
<dbReference type="SUPFAM" id="SSF100920">
    <property type="entry name" value="Heat shock protein 70kD (HSP70), peptide-binding domain"/>
    <property type="match status" value="1"/>
</dbReference>
<dbReference type="PROSITE" id="PS00297">
    <property type="entry name" value="HSP70_1"/>
    <property type="match status" value="1"/>
</dbReference>
<dbReference type="PROSITE" id="PS00329">
    <property type="entry name" value="HSP70_2"/>
    <property type="match status" value="1"/>
</dbReference>
<dbReference type="PROSITE" id="PS01036">
    <property type="entry name" value="HSP70_3"/>
    <property type="match status" value="1"/>
</dbReference>
<protein>
    <recommendedName>
        <fullName evidence="1">Chaperone protein DnaK</fullName>
    </recommendedName>
    <alternativeName>
        <fullName evidence="1">HSP70</fullName>
    </alternativeName>
    <alternativeName>
        <fullName evidence="1">Heat shock 70 kDa protein</fullName>
    </alternativeName>
    <alternativeName>
        <fullName evidence="1">Heat shock protein 70</fullName>
    </alternativeName>
</protein>
<name>DNAK_STRT2</name>